<evidence type="ECO:0000255" key="1">
    <source>
        <dbReference type="HAMAP-Rule" id="MF_00580"/>
    </source>
</evidence>
<dbReference type="EMBL" id="AP010918">
    <property type="protein sequence ID" value="BAH27760.1"/>
    <property type="molecule type" value="Genomic_DNA"/>
</dbReference>
<dbReference type="RefSeq" id="WP_003418028.1">
    <property type="nucleotide sequence ID" value="NZ_CP014566.1"/>
</dbReference>
<dbReference type="SMR" id="C1AHN1"/>
<dbReference type="GeneID" id="66599586"/>
<dbReference type="KEGG" id="mbt:JTY_3488"/>
<dbReference type="HOGENOM" id="CLU_132825_2_0_11"/>
<dbReference type="GO" id="GO:0005737">
    <property type="term" value="C:cytoplasm"/>
    <property type="evidence" value="ECO:0007669"/>
    <property type="project" value="UniProtKB-SubCell"/>
</dbReference>
<dbReference type="GO" id="GO:0005524">
    <property type="term" value="F:ATP binding"/>
    <property type="evidence" value="ECO:0007669"/>
    <property type="project" value="InterPro"/>
</dbReference>
<dbReference type="GO" id="GO:0046872">
    <property type="term" value="F:metal ion binding"/>
    <property type="evidence" value="ECO:0007669"/>
    <property type="project" value="TreeGrafter"/>
</dbReference>
<dbReference type="GO" id="GO:0044183">
    <property type="term" value="F:protein folding chaperone"/>
    <property type="evidence" value="ECO:0007669"/>
    <property type="project" value="InterPro"/>
</dbReference>
<dbReference type="GO" id="GO:0051087">
    <property type="term" value="F:protein-folding chaperone binding"/>
    <property type="evidence" value="ECO:0007669"/>
    <property type="project" value="TreeGrafter"/>
</dbReference>
<dbReference type="GO" id="GO:0051082">
    <property type="term" value="F:unfolded protein binding"/>
    <property type="evidence" value="ECO:0007669"/>
    <property type="project" value="TreeGrafter"/>
</dbReference>
<dbReference type="GO" id="GO:0051085">
    <property type="term" value="P:chaperone cofactor-dependent protein refolding"/>
    <property type="evidence" value="ECO:0007669"/>
    <property type="project" value="TreeGrafter"/>
</dbReference>
<dbReference type="CDD" id="cd00320">
    <property type="entry name" value="cpn10"/>
    <property type="match status" value="1"/>
</dbReference>
<dbReference type="FunFam" id="2.30.33.40:FF:000001">
    <property type="entry name" value="10 kDa chaperonin"/>
    <property type="match status" value="1"/>
</dbReference>
<dbReference type="Gene3D" id="2.30.33.40">
    <property type="entry name" value="GroES chaperonin"/>
    <property type="match status" value="1"/>
</dbReference>
<dbReference type="HAMAP" id="MF_00580">
    <property type="entry name" value="CH10"/>
    <property type="match status" value="1"/>
</dbReference>
<dbReference type="InterPro" id="IPR020818">
    <property type="entry name" value="Chaperonin_GroES"/>
</dbReference>
<dbReference type="InterPro" id="IPR037124">
    <property type="entry name" value="Chaperonin_GroES_sf"/>
</dbReference>
<dbReference type="InterPro" id="IPR018369">
    <property type="entry name" value="Chaprnonin_Cpn10_CS"/>
</dbReference>
<dbReference type="InterPro" id="IPR011032">
    <property type="entry name" value="GroES-like_sf"/>
</dbReference>
<dbReference type="NCBIfam" id="NF001530">
    <property type="entry name" value="PRK00364.1-6"/>
    <property type="match status" value="1"/>
</dbReference>
<dbReference type="NCBIfam" id="NF001531">
    <property type="entry name" value="PRK00364.2-2"/>
    <property type="match status" value="1"/>
</dbReference>
<dbReference type="NCBIfam" id="NF001533">
    <property type="entry name" value="PRK00364.2-4"/>
    <property type="match status" value="1"/>
</dbReference>
<dbReference type="NCBIfam" id="NF001534">
    <property type="entry name" value="PRK00364.2-5"/>
    <property type="match status" value="1"/>
</dbReference>
<dbReference type="PANTHER" id="PTHR10772">
    <property type="entry name" value="10 KDA HEAT SHOCK PROTEIN"/>
    <property type="match status" value="1"/>
</dbReference>
<dbReference type="PANTHER" id="PTHR10772:SF58">
    <property type="entry name" value="CO-CHAPERONIN GROES"/>
    <property type="match status" value="1"/>
</dbReference>
<dbReference type="Pfam" id="PF00166">
    <property type="entry name" value="Cpn10"/>
    <property type="match status" value="1"/>
</dbReference>
<dbReference type="PRINTS" id="PR00297">
    <property type="entry name" value="CHAPERONIN10"/>
</dbReference>
<dbReference type="SMART" id="SM00883">
    <property type="entry name" value="Cpn10"/>
    <property type="match status" value="1"/>
</dbReference>
<dbReference type="SUPFAM" id="SSF50129">
    <property type="entry name" value="GroES-like"/>
    <property type="match status" value="1"/>
</dbReference>
<dbReference type="PROSITE" id="PS00681">
    <property type="entry name" value="CHAPERONINS_CPN10"/>
    <property type="match status" value="1"/>
</dbReference>
<keyword id="KW-0143">Chaperone</keyword>
<keyword id="KW-0963">Cytoplasm</keyword>
<proteinExistence type="inferred from homology"/>
<gene>
    <name evidence="1" type="primary">groES</name>
    <name evidence="1" type="synonym">groS</name>
    <name type="ordered locus">JTY_3488</name>
</gene>
<sequence length="100" mass="10804">MAKVNIKPLEDKILVQANEAETTTASGLVIPDTAKEKPQEGTVVAVGPGRWDEDGEKRIPLDVAEGDTVIYSKYGGTEIKYNGEEYLILSARDVLAVVSK</sequence>
<comment type="function">
    <text evidence="1">Together with the chaperonin GroEL, plays an essential role in assisting protein folding. The GroEL-GroES system forms a nano-cage that allows encapsulation of the non-native substrate proteins and provides a physical environment optimized to promote and accelerate protein folding. GroES binds to the apical surface of the GroEL ring, thereby capping the opening of the GroEL channel.</text>
</comment>
<comment type="subunit">
    <text evidence="1">Heptamer of 7 subunits arranged in a ring. Interacts with the chaperonin GroEL.</text>
</comment>
<comment type="subcellular location">
    <subcellularLocation>
        <location evidence="1">Cytoplasm</location>
    </subcellularLocation>
</comment>
<comment type="similarity">
    <text evidence="1">Belongs to the GroES chaperonin family.</text>
</comment>
<reference key="1">
    <citation type="journal article" date="2009" name="Vaccine">
        <title>Whole genome sequence analysis of Mycobacterium bovis bacillus Calmette-Guerin (BCG) Tokyo 172: a comparative study of BCG vaccine substrains.</title>
        <authorList>
            <person name="Seki M."/>
            <person name="Honda I."/>
            <person name="Fujita I."/>
            <person name="Yano I."/>
            <person name="Yamamoto S."/>
            <person name="Koyama A."/>
        </authorList>
    </citation>
    <scope>NUCLEOTIDE SEQUENCE [LARGE SCALE GENOMIC DNA]</scope>
    <source>
        <strain>BCG / Tokyo 172 / ATCC 35737 / TMC 1019</strain>
    </source>
</reference>
<accession>C1AHN1</accession>
<protein>
    <recommendedName>
        <fullName evidence="1">Co-chaperonin GroES</fullName>
    </recommendedName>
    <alternativeName>
        <fullName evidence="1">10 kDa chaperonin</fullName>
    </alternativeName>
    <alternativeName>
        <fullName evidence="1">Chaperonin-10</fullName>
        <shortName evidence="1">Cpn10</shortName>
    </alternativeName>
</protein>
<feature type="chain" id="PRO_1000146911" description="Co-chaperonin GroES">
    <location>
        <begin position="1"/>
        <end position="100"/>
    </location>
</feature>
<organism>
    <name type="scientific">Mycobacterium bovis (strain BCG / Tokyo 172 / ATCC 35737 / TMC 1019)</name>
    <dbReference type="NCBI Taxonomy" id="561275"/>
    <lineage>
        <taxon>Bacteria</taxon>
        <taxon>Bacillati</taxon>
        <taxon>Actinomycetota</taxon>
        <taxon>Actinomycetes</taxon>
        <taxon>Mycobacteriales</taxon>
        <taxon>Mycobacteriaceae</taxon>
        <taxon>Mycobacterium</taxon>
        <taxon>Mycobacterium tuberculosis complex</taxon>
    </lineage>
</organism>
<name>CH10_MYCBT</name>